<sequence length="346" mass="38630">MAHHPRWTLSQVTELFNKPLLDLLFDAQQIHRQHFDPQQVQVSTLLSIKTGACPEDCKYCPQSSRYKTGLEAERLMEVEQVLDSARKAKNAGSTRFCMGAAWKNPHERDMPYLEQMVQGVKAMGLEACMTLGTLNESQAQRLANAGLDYYNHNLDTSPEFYGNIITTRSYQERLDTLDKVREAGIKVCSGGIVGLGETVKDRAGLLLQLANLPTPPESVPINMLVKVKGTPLADNEDVDAFDFIRTIAVARIMMPTSYVRLSAGREQMNEQTQAMCFMAGANSIFYGCKLLTTPNPEEDKDLQLFRKLGLNPQQTSVLAGDNEQQQRLEQALMTPDTDDYYNAAAV</sequence>
<feature type="chain" id="PRO_0000381307" description="Biotin synthase">
    <location>
        <begin position="1"/>
        <end position="346"/>
    </location>
</feature>
<feature type="domain" description="Radical SAM core" evidence="2">
    <location>
        <begin position="38"/>
        <end position="256"/>
    </location>
</feature>
<feature type="binding site" evidence="1">
    <location>
        <position position="53"/>
    </location>
    <ligand>
        <name>[4Fe-4S] cluster</name>
        <dbReference type="ChEBI" id="CHEBI:49883"/>
        <note>4Fe-4S-S-AdoMet</note>
    </ligand>
</feature>
<feature type="binding site" evidence="1">
    <location>
        <position position="57"/>
    </location>
    <ligand>
        <name>[4Fe-4S] cluster</name>
        <dbReference type="ChEBI" id="CHEBI:49883"/>
        <note>4Fe-4S-S-AdoMet</note>
    </ligand>
</feature>
<feature type="binding site" evidence="1">
    <location>
        <position position="60"/>
    </location>
    <ligand>
        <name>[4Fe-4S] cluster</name>
        <dbReference type="ChEBI" id="CHEBI:49883"/>
        <note>4Fe-4S-S-AdoMet</note>
    </ligand>
</feature>
<feature type="binding site" evidence="1">
    <location>
        <position position="97"/>
    </location>
    <ligand>
        <name>[2Fe-2S] cluster</name>
        <dbReference type="ChEBI" id="CHEBI:190135"/>
    </ligand>
</feature>
<feature type="binding site" evidence="1">
    <location>
        <position position="128"/>
    </location>
    <ligand>
        <name>[2Fe-2S] cluster</name>
        <dbReference type="ChEBI" id="CHEBI:190135"/>
    </ligand>
</feature>
<feature type="binding site" evidence="1">
    <location>
        <position position="188"/>
    </location>
    <ligand>
        <name>[2Fe-2S] cluster</name>
        <dbReference type="ChEBI" id="CHEBI:190135"/>
    </ligand>
</feature>
<feature type="binding site" evidence="1">
    <location>
        <position position="260"/>
    </location>
    <ligand>
        <name>[2Fe-2S] cluster</name>
        <dbReference type="ChEBI" id="CHEBI:190135"/>
    </ligand>
</feature>
<dbReference type="EC" id="2.8.1.6" evidence="1"/>
<dbReference type="EMBL" id="CP000822">
    <property type="protein sequence ID" value="ABV13475.1"/>
    <property type="molecule type" value="Genomic_DNA"/>
</dbReference>
<dbReference type="RefSeq" id="WP_012133202.1">
    <property type="nucleotide sequence ID" value="NC_009792.1"/>
</dbReference>
<dbReference type="SMR" id="A8AJ12"/>
<dbReference type="STRING" id="290338.CKO_02353"/>
<dbReference type="GeneID" id="45136256"/>
<dbReference type="KEGG" id="cko:CKO_02353"/>
<dbReference type="HOGENOM" id="CLU_033172_1_2_6"/>
<dbReference type="OrthoDB" id="9786826at2"/>
<dbReference type="UniPathway" id="UPA00078">
    <property type="reaction ID" value="UER00162"/>
</dbReference>
<dbReference type="Proteomes" id="UP000008148">
    <property type="component" value="Chromosome"/>
</dbReference>
<dbReference type="GO" id="GO:0051537">
    <property type="term" value="F:2 iron, 2 sulfur cluster binding"/>
    <property type="evidence" value="ECO:0007669"/>
    <property type="project" value="UniProtKB-KW"/>
</dbReference>
<dbReference type="GO" id="GO:0051539">
    <property type="term" value="F:4 iron, 4 sulfur cluster binding"/>
    <property type="evidence" value="ECO:0007669"/>
    <property type="project" value="UniProtKB-KW"/>
</dbReference>
<dbReference type="GO" id="GO:0004076">
    <property type="term" value="F:biotin synthase activity"/>
    <property type="evidence" value="ECO:0007669"/>
    <property type="project" value="UniProtKB-UniRule"/>
</dbReference>
<dbReference type="GO" id="GO:0005506">
    <property type="term" value="F:iron ion binding"/>
    <property type="evidence" value="ECO:0007669"/>
    <property type="project" value="UniProtKB-UniRule"/>
</dbReference>
<dbReference type="GO" id="GO:0009102">
    <property type="term" value="P:biotin biosynthetic process"/>
    <property type="evidence" value="ECO:0007669"/>
    <property type="project" value="UniProtKB-UniRule"/>
</dbReference>
<dbReference type="CDD" id="cd01335">
    <property type="entry name" value="Radical_SAM"/>
    <property type="match status" value="1"/>
</dbReference>
<dbReference type="FunFam" id="3.20.20.70:FF:000011">
    <property type="entry name" value="Biotin synthase"/>
    <property type="match status" value="1"/>
</dbReference>
<dbReference type="Gene3D" id="3.20.20.70">
    <property type="entry name" value="Aldolase class I"/>
    <property type="match status" value="1"/>
</dbReference>
<dbReference type="HAMAP" id="MF_01694">
    <property type="entry name" value="BioB"/>
    <property type="match status" value="1"/>
</dbReference>
<dbReference type="InterPro" id="IPR013785">
    <property type="entry name" value="Aldolase_TIM"/>
</dbReference>
<dbReference type="InterPro" id="IPR010722">
    <property type="entry name" value="BATS_dom"/>
</dbReference>
<dbReference type="InterPro" id="IPR002684">
    <property type="entry name" value="Biotin_synth/BioAB"/>
</dbReference>
<dbReference type="InterPro" id="IPR024177">
    <property type="entry name" value="Biotin_synthase"/>
</dbReference>
<dbReference type="InterPro" id="IPR006638">
    <property type="entry name" value="Elp3/MiaA/NifB-like_rSAM"/>
</dbReference>
<dbReference type="InterPro" id="IPR007197">
    <property type="entry name" value="rSAM"/>
</dbReference>
<dbReference type="NCBIfam" id="TIGR00433">
    <property type="entry name" value="bioB"/>
    <property type="match status" value="1"/>
</dbReference>
<dbReference type="PANTHER" id="PTHR22976">
    <property type="entry name" value="BIOTIN SYNTHASE"/>
    <property type="match status" value="1"/>
</dbReference>
<dbReference type="PANTHER" id="PTHR22976:SF2">
    <property type="entry name" value="BIOTIN SYNTHASE, MITOCHONDRIAL"/>
    <property type="match status" value="1"/>
</dbReference>
<dbReference type="Pfam" id="PF06968">
    <property type="entry name" value="BATS"/>
    <property type="match status" value="1"/>
</dbReference>
<dbReference type="Pfam" id="PF04055">
    <property type="entry name" value="Radical_SAM"/>
    <property type="match status" value="1"/>
</dbReference>
<dbReference type="PIRSF" id="PIRSF001619">
    <property type="entry name" value="Biotin_synth"/>
    <property type="match status" value="1"/>
</dbReference>
<dbReference type="SFLD" id="SFLDF00272">
    <property type="entry name" value="biotin_synthase"/>
    <property type="match status" value="1"/>
</dbReference>
<dbReference type="SFLD" id="SFLDG01278">
    <property type="entry name" value="biotin_synthase_like"/>
    <property type="match status" value="1"/>
</dbReference>
<dbReference type="SMART" id="SM00876">
    <property type="entry name" value="BATS"/>
    <property type="match status" value="1"/>
</dbReference>
<dbReference type="SMART" id="SM00729">
    <property type="entry name" value="Elp3"/>
    <property type="match status" value="1"/>
</dbReference>
<dbReference type="SUPFAM" id="SSF102114">
    <property type="entry name" value="Radical SAM enzymes"/>
    <property type="match status" value="1"/>
</dbReference>
<dbReference type="PROSITE" id="PS51918">
    <property type="entry name" value="RADICAL_SAM"/>
    <property type="match status" value="1"/>
</dbReference>
<organism>
    <name type="scientific">Citrobacter koseri (strain ATCC BAA-895 / CDC 4225-83 / SGSC4696)</name>
    <dbReference type="NCBI Taxonomy" id="290338"/>
    <lineage>
        <taxon>Bacteria</taxon>
        <taxon>Pseudomonadati</taxon>
        <taxon>Pseudomonadota</taxon>
        <taxon>Gammaproteobacteria</taxon>
        <taxon>Enterobacterales</taxon>
        <taxon>Enterobacteriaceae</taxon>
        <taxon>Citrobacter</taxon>
    </lineage>
</organism>
<protein>
    <recommendedName>
        <fullName evidence="1">Biotin synthase</fullName>
        <ecNumber evidence="1">2.8.1.6</ecNumber>
    </recommendedName>
</protein>
<accession>A8AJ12</accession>
<reference key="1">
    <citation type="submission" date="2007-08" db="EMBL/GenBank/DDBJ databases">
        <authorList>
            <consortium name="The Citrobacter koseri Genome Sequencing Project"/>
            <person name="McClelland M."/>
            <person name="Sanderson E.K."/>
            <person name="Porwollik S."/>
            <person name="Spieth J."/>
            <person name="Clifton W.S."/>
            <person name="Latreille P."/>
            <person name="Courtney L."/>
            <person name="Wang C."/>
            <person name="Pepin K."/>
            <person name="Bhonagiri V."/>
            <person name="Nash W."/>
            <person name="Johnson M."/>
            <person name="Thiruvilangam P."/>
            <person name="Wilson R."/>
        </authorList>
    </citation>
    <scope>NUCLEOTIDE SEQUENCE [LARGE SCALE GENOMIC DNA]</scope>
    <source>
        <strain>ATCC BAA-895 / CDC 4225-83 / SGSC4696</strain>
    </source>
</reference>
<proteinExistence type="inferred from homology"/>
<gene>
    <name evidence="1" type="primary">bioB</name>
    <name type="ordered locus">CKO_02353</name>
</gene>
<name>BIOB_CITK8</name>
<evidence type="ECO:0000255" key="1">
    <source>
        <dbReference type="HAMAP-Rule" id="MF_01694"/>
    </source>
</evidence>
<evidence type="ECO:0000255" key="2">
    <source>
        <dbReference type="PROSITE-ProRule" id="PRU01266"/>
    </source>
</evidence>
<comment type="function">
    <text evidence="1">Catalyzes the conversion of dethiobiotin (DTB) to biotin by the insertion of a sulfur atom into dethiobiotin via a radical-based mechanism.</text>
</comment>
<comment type="catalytic activity">
    <reaction evidence="1">
        <text>(4R,5S)-dethiobiotin + (sulfur carrier)-SH + 2 reduced [2Fe-2S]-[ferredoxin] + 2 S-adenosyl-L-methionine = (sulfur carrier)-H + biotin + 2 5'-deoxyadenosine + 2 L-methionine + 2 oxidized [2Fe-2S]-[ferredoxin]</text>
        <dbReference type="Rhea" id="RHEA:22060"/>
        <dbReference type="Rhea" id="RHEA-COMP:10000"/>
        <dbReference type="Rhea" id="RHEA-COMP:10001"/>
        <dbReference type="Rhea" id="RHEA-COMP:14737"/>
        <dbReference type="Rhea" id="RHEA-COMP:14739"/>
        <dbReference type="ChEBI" id="CHEBI:17319"/>
        <dbReference type="ChEBI" id="CHEBI:29917"/>
        <dbReference type="ChEBI" id="CHEBI:33737"/>
        <dbReference type="ChEBI" id="CHEBI:33738"/>
        <dbReference type="ChEBI" id="CHEBI:57586"/>
        <dbReference type="ChEBI" id="CHEBI:57844"/>
        <dbReference type="ChEBI" id="CHEBI:59789"/>
        <dbReference type="ChEBI" id="CHEBI:64428"/>
        <dbReference type="ChEBI" id="CHEBI:149473"/>
        <dbReference type="EC" id="2.8.1.6"/>
    </reaction>
</comment>
<comment type="cofactor">
    <cofactor evidence="1">
        <name>[4Fe-4S] cluster</name>
        <dbReference type="ChEBI" id="CHEBI:49883"/>
    </cofactor>
    <text evidence="1">Binds 1 [4Fe-4S] cluster. The cluster is coordinated with 3 cysteines and an exchangeable S-adenosyl-L-methionine.</text>
</comment>
<comment type="cofactor">
    <cofactor evidence="1">
        <name>[2Fe-2S] cluster</name>
        <dbReference type="ChEBI" id="CHEBI:190135"/>
    </cofactor>
    <text evidence="1">Binds 1 [2Fe-2S] cluster. The cluster is coordinated with 3 cysteines and 1 arginine.</text>
</comment>
<comment type="pathway">
    <text evidence="1">Cofactor biosynthesis; biotin biosynthesis; biotin from 7,8-diaminononanoate: step 2/2.</text>
</comment>
<comment type="subunit">
    <text evidence="1">Homodimer.</text>
</comment>
<comment type="similarity">
    <text evidence="1">Belongs to the radical SAM superfamily. Biotin synthase family.</text>
</comment>
<keyword id="KW-0001">2Fe-2S</keyword>
<keyword id="KW-0004">4Fe-4S</keyword>
<keyword id="KW-0093">Biotin biosynthesis</keyword>
<keyword id="KW-0408">Iron</keyword>
<keyword id="KW-0411">Iron-sulfur</keyword>
<keyword id="KW-0479">Metal-binding</keyword>
<keyword id="KW-1185">Reference proteome</keyword>
<keyword id="KW-0949">S-adenosyl-L-methionine</keyword>
<keyword id="KW-0808">Transferase</keyword>